<protein>
    <recommendedName>
        <fullName evidence="1">GTPase Der</fullName>
    </recommendedName>
    <alternativeName>
        <fullName evidence="1">GTP-binding protein EngA</fullName>
    </alternativeName>
</protein>
<organism>
    <name type="scientific">Rhodopseudomonas palustris (strain BisA53)</name>
    <dbReference type="NCBI Taxonomy" id="316055"/>
    <lineage>
        <taxon>Bacteria</taxon>
        <taxon>Pseudomonadati</taxon>
        <taxon>Pseudomonadota</taxon>
        <taxon>Alphaproteobacteria</taxon>
        <taxon>Hyphomicrobiales</taxon>
        <taxon>Nitrobacteraceae</taxon>
        <taxon>Rhodopseudomonas</taxon>
    </lineage>
</organism>
<proteinExistence type="inferred from homology"/>
<sequence length="460" mass="51115">MSFTFAIIGRPNVGKSTLFNRLVGQKLALVDDTPGVTRDRREGEGRLGDLEFTLIDTAGLDEGAKGSLTERMQQQTETAIELADALMFVFDARAGLTPNDRAFADFARRANKPVILVANKSEGKAGEIGAMESYALGLGDPVQISAEHGEGLSELYDAFRALMPEPDEEAEEDDDVEGLTEEEFSKRPIRVAIVGRPNAGKSTMINHLLGEERLLTSPEAGTTRDSIAVSVDYKGRQFRIFDTAGLRRRSRIEEKLEKLSVADALRAVRFAEVVVLMLDAQTKFEEQDLRIADLIEREGRALVIAVNKWDLVERHPGQIGALRTEADHWLPQVKGVPIVAVSGLMGEGIDRLMSAIEDSYATWNRRVPTAALNRWFEQAIQTNPPPAVSGRRLKLNYVTQAKARPPSFIVFCSRADAVPESYLRYLVNSLRNYFELPGTPVRIMLREKANPFAHKRKRPS</sequence>
<keyword id="KW-0342">GTP-binding</keyword>
<keyword id="KW-0547">Nucleotide-binding</keyword>
<keyword id="KW-0677">Repeat</keyword>
<keyword id="KW-0690">Ribosome biogenesis</keyword>
<name>DER_RHOP5</name>
<evidence type="ECO:0000255" key="1">
    <source>
        <dbReference type="HAMAP-Rule" id="MF_00195"/>
    </source>
</evidence>
<feature type="chain" id="PRO_1000011717" description="GTPase Der">
    <location>
        <begin position="1"/>
        <end position="460"/>
    </location>
</feature>
<feature type="domain" description="EngA-type G 1">
    <location>
        <begin position="3"/>
        <end position="167"/>
    </location>
</feature>
<feature type="domain" description="EngA-type G 2">
    <location>
        <begin position="189"/>
        <end position="364"/>
    </location>
</feature>
<feature type="domain" description="KH-like" evidence="1">
    <location>
        <begin position="365"/>
        <end position="449"/>
    </location>
</feature>
<feature type="binding site" evidence="1">
    <location>
        <begin position="9"/>
        <end position="16"/>
    </location>
    <ligand>
        <name>GTP</name>
        <dbReference type="ChEBI" id="CHEBI:37565"/>
        <label>1</label>
    </ligand>
</feature>
<feature type="binding site" evidence="1">
    <location>
        <begin position="56"/>
        <end position="60"/>
    </location>
    <ligand>
        <name>GTP</name>
        <dbReference type="ChEBI" id="CHEBI:37565"/>
        <label>1</label>
    </ligand>
</feature>
<feature type="binding site" evidence="1">
    <location>
        <begin position="119"/>
        <end position="122"/>
    </location>
    <ligand>
        <name>GTP</name>
        <dbReference type="ChEBI" id="CHEBI:37565"/>
        <label>1</label>
    </ligand>
</feature>
<feature type="binding site" evidence="1">
    <location>
        <begin position="195"/>
        <end position="202"/>
    </location>
    <ligand>
        <name>GTP</name>
        <dbReference type="ChEBI" id="CHEBI:37565"/>
        <label>2</label>
    </ligand>
</feature>
<feature type="binding site" evidence="1">
    <location>
        <begin position="242"/>
        <end position="246"/>
    </location>
    <ligand>
        <name>GTP</name>
        <dbReference type="ChEBI" id="CHEBI:37565"/>
        <label>2</label>
    </ligand>
</feature>
<feature type="binding site" evidence="1">
    <location>
        <begin position="307"/>
        <end position="310"/>
    </location>
    <ligand>
        <name>GTP</name>
        <dbReference type="ChEBI" id="CHEBI:37565"/>
        <label>2</label>
    </ligand>
</feature>
<gene>
    <name evidence="1" type="primary">der</name>
    <name type="synonym">engA</name>
    <name type="ordered locus">RPE_3345</name>
</gene>
<reference key="1">
    <citation type="submission" date="2006-09" db="EMBL/GenBank/DDBJ databases">
        <title>Complete sequence of Rhodopseudomonas palustris BisA53.</title>
        <authorList>
            <consortium name="US DOE Joint Genome Institute"/>
            <person name="Copeland A."/>
            <person name="Lucas S."/>
            <person name="Lapidus A."/>
            <person name="Barry K."/>
            <person name="Detter J.C."/>
            <person name="Glavina del Rio T."/>
            <person name="Hammon N."/>
            <person name="Israni S."/>
            <person name="Dalin E."/>
            <person name="Tice H."/>
            <person name="Pitluck S."/>
            <person name="Chain P."/>
            <person name="Malfatti S."/>
            <person name="Shin M."/>
            <person name="Vergez L."/>
            <person name="Schmutz J."/>
            <person name="Larimer F."/>
            <person name="Land M."/>
            <person name="Hauser L."/>
            <person name="Pelletier D.A."/>
            <person name="Kyrpides N."/>
            <person name="Kim E."/>
            <person name="Harwood C.S."/>
            <person name="Oda Y."/>
            <person name="Richardson P."/>
        </authorList>
    </citation>
    <scope>NUCLEOTIDE SEQUENCE [LARGE SCALE GENOMIC DNA]</scope>
    <source>
        <strain>BisA53</strain>
    </source>
</reference>
<accession>Q07LA7</accession>
<comment type="function">
    <text evidence="1">GTPase that plays an essential role in the late steps of ribosome biogenesis.</text>
</comment>
<comment type="subunit">
    <text evidence="1">Associates with the 50S ribosomal subunit.</text>
</comment>
<comment type="similarity">
    <text evidence="1">Belongs to the TRAFAC class TrmE-Era-EngA-EngB-Septin-like GTPase superfamily. EngA (Der) GTPase family.</text>
</comment>
<dbReference type="EMBL" id="CP000463">
    <property type="protein sequence ID" value="ABJ07277.1"/>
    <property type="molecule type" value="Genomic_DNA"/>
</dbReference>
<dbReference type="SMR" id="Q07LA7"/>
<dbReference type="STRING" id="316055.RPE_3345"/>
<dbReference type="KEGG" id="rpe:RPE_3345"/>
<dbReference type="eggNOG" id="COG1160">
    <property type="taxonomic scope" value="Bacteria"/>
</dbReference>
<dbReference type="HOGENOM" id="CLU_016077_5_0_5"/>
<dbReference type="OrthoDB" id="9805918at2"/>
<dbReference type="GO" id="GO:0005525">
    <property type="term" value="F:GTP binding"/>
    <property type="evidence" value="ECO:0007669"/>
    <property type="project" value="UniProtKB-UniRule"/>
</dbReference>
<dbReference type="GO" id="GO:0042254">
    <property type="term" value="P:ribosome biogenesis"/>
    <property type="evidence" value="ECO:0007669"/>
    <property type="project" value="UniProtKB-KW"/>
</dbReference>
<dbReference type="CDD" id="cd01894">
    <property type="entry name" value="EngA1"/>
    <property type="match status" value="1"/>
</dbReference>
<dbReference type="CDD" id="cd01895">
    <property type="entry name" value="EngA2"/>
    <property type="match status" value="1"/>
</dbReference>
<dbReference type="FunFam" id="3.30.300.20:FF:000004">
    <property type="entry name" value="GTPase Der"/>
    <property type="match status" value="1"/>
</dbReference>
<dbReference type="FunFam" id="3.40.50.300:FF:000040">
    <property type="entry name" value="GTPase Der"/>
    <property type="match status" value="1"/>
</dbReference>
<dbReference type="FunFam" id="3.40.50.300:FF:000057">
    <property type="entry name" value="GTPase Der"/>
    <property type="match status" value="1"/>
</dbReference>
<dbReference type="Gene3D" id="3.30.300.20">
    <property type="match status" value="1"/>
</dbReference>
<dbReference type="Gene3D" id="3.40.50.300">
    <property type="entry name" value="P-loop containing nucleotide triphosphate hydrolases"/>
    <property type="match status" value="2"/>
</dbReference>
<dbReference type="HAMAP" id="MF_00195">
    <property type="entry name" value="GTPase_Der"/>
    <property type="match status" value="1"/>
</dbReference>
<dbReference type="InterPro" id="IPR031166">
    <property type="entry name" value="G_ENGA"/>
</dbReference>
<dbReference type="InterPro" id="IPR006073">
    <property type="entry name" value="GTP-bd"/>
</dbReference>
<dbReference type="InterPro" id="IPR016484">
    <property type="entry name" value="GTPase_Der"/>
</dbReference>
<dbReference type="InterPro" id="IPR032859">
    <property type="entry name" value="KH_dom-like"/>
</dbReference>
<dbReference type="InterPro" id="IPR015946">
    <property type="entry name" value="KH_dom-like_a/b"/>
</dbReference>
<dbReference type="InterPro" id="IPR027417">
    <property type="entry name" value="P-loop_NTPase"/>
</dbReference>
<dbReference type="InterPro" id="IPR005225">
    <property type="entry name" value="Small_GTP-bd"/>
</dbReference>
<dbReference type="NCBIfam" id="TIGR03594">
    <property type="entry name" value="GTPase_EngA"/>
    <property type="match status" value="1"/>
</dbReference>
<dbReference type="NCBIfam" id="TIGR00231">
    <property type="entry name" value="small_GTP"/>
    <property type="match status" value="2"/>
</dbReference>
<dbReference type="PANTHER" id="PTHR43834">
    <property type="entry name" value="GTPASE DER"/>
    <property type="match status" value="1"/>
</dbReference>
<dbReference type="PANTHER" id="PTHR43834:SF6">
    <property type="entry name" value="GTPASE DER"/>
    <property type="match status" value="1"/>
</dbReference>
<dbReference type="Pfam" id="PF14714">
    <property type="entry name" value="KH_dom-like"/>
    <property type="match status" value="1"/>
</dbReference>
<dbReference type="Pfam" id="PF01926">
    <property type="entry name" value="MMR_HSR1"/>
    <property type="match status" value="2"/>
</dbReference>
<dbReference type="PIRSF" id="PIRSF006485">
    <property type="entry name" value="GTP-binding_EngA"/>
    <property type="match status" value="1"/>
</dbReference>
<dbReference type="PRINTS" id="PR00326">
    <property type="entry name" value="GTP1OBG"/>
</dbReference>
<dbReference type="SUPFAM" id="SSF52540">
    <property type="entry name" value="P-loop containing nucleoside triphosphate hydrolases"/>
    <property type="match status" value="2"/>
</dbReference>
<dbReference type="PROSITE" id="PS51712">
    <property type="entry name" value="G_ENGA"/>
    <property type="match status" value="2"/>
</dbReference>